<keyword id="KW-0238">DNA-binding</keyword>
<keyword id="KW-0489">Methyltransferase</keyword>
<keyword id="KW-0680">Restriction system</keyword>
<keyword id="KW-0949">S-adenosyl-L-methionine</keyword>
<keyword id="KW-0808">Transferase</keyword>
<accession>O52513</accession>
<gene>
    <name evidence="2" type="primary">sfiIM</name>
</gene>
<sequence>MRKPSSGQPAGLDAWDETRSLATHAGPDFALYVGDSLDCLAKLPDESINTVVTSPPYWAVRDYEHDEQLGLEDEVDDYVERLVKIFREVYRVLATDGSAWLNIGDSYFNKQITVGGKPPRTGWKRNKQLSLVPFRVALALQDDGWWIRNVAVWHKPNAMPASVRDRLTVTWEPVFLLTKSERYYFNLDEIRVPHQTSDAIERRRAESGTVTGKAQGKKELRKWLNSPRHRATIEGIKEVERRPNAPAAVELASYLRTALKEKKRSIAWVAEQLDLPFERTRHYFRTDEIGSRLPPPEVWEQLKDLLELDATYDEAMTVEVGDNVFRNHPNGKNPGDLLSIPTAPSGANHFAVMPRKLAHFALKATLPMNGSCLDPFMGSGTTGRVVRELGGRFVGVDVNEHYMTDYLVESGVISPETETLW</sequence>
<organism>
    <name type="scientific">Streptomyces fimbriatus</name>
    <dbReference type="NCBI Taxonomy" id="68197"/>
    <lineage>
        <taxon>Bacteria</taxon>
        <taxon>Bacillati</taxon>
        <taxon>Actinomycetota</taxon>
        <taxon>Actinomycetes</taxon>
        <taxon>Kitasatosporales</taxon>
        <taxon>Streptomycetaceae</taxon>
        <taxon>Streptomyces</taxon>
    </lineage>
</organism>
<evidence type="ECO:0000303" key="1">
    <source>
    </source>
</evidence>
<evidence type="ECO:0000303" key="2">
    <source ref="1"/>
</evidence>
<evidence type="ECO:0000305" key="3"/>
<reference key="1">
    <citation type="submission" date="1997-12" db="EMBL/GenBank/DDBJ databases">
        <title>Characterization of the SfiI restriction and modification genes.</title>
        <authorList>
            <person name="van Cott E.M."/>
            <person name="Moran L.S."/>
            <person name="Slatko B.E."/>
            <person name="Wilson G.G."/>
        </authorList>
    </citation>
    <scope>NUCLEOTIDE SEQUENCE [GENOMIC DNA]</scope>
</reference>
<reference key="2">
    <citation type="journal article" date="2003" name="Nucleic Acids Res.">
        <title>A nomenclature for restriction enzymes, DNA methyltransferases, homing endonucleases and their genes.</title>
        <authorList>
            <person name="Roberts R.J."/>
            <person name="Belfort M."/>
            <person name="Bestor T."/>
            <person name="Bhagwat A.S."/>
            <person name="Bickle T.A."/>
            <person name="Bitinaite J."/>
            <person name="Blumenthal R.M."/>
            <person name="Degtyarev S.K."/>
            <person name="Dryden D.T."/>
            <person name="Dybvig K."/>
            <person name="Firman K."/>
            <person name="Gromova E.S."/>
            <person name="Gumport R.I."/>
            <person name="Halford S.E."/>
            <person name="Hattman S."/>
            <person name="Heitman J."/>
            <person name="Hornby D.P."/>
            <person name="Janulaitis A."/>
            <person name="Jeltsch A."/>
            <person name="Josephsen J."/>
            <person name="Kiss A."/>
            <person name="Klaenhammer T.R."/>
            <person name="Kobayashi I."/>
            <person name="Kong H."/>
            <person name="Krueger D.H."/>
            <person name="Lacks S."/>
            <person name="Marinus M.G."/>
            <person name="Miyahara M."/>
            <person name="Morgan R.D."/>
            <person name="Murray N.E."/>
            <person name="Nagaraja V."/>
            <person name="Piekarowicz A."/>
            <person name="Pingoud A."/>
            <person name="Raleigh E."/>
            <person name="Rao D.N."/>
            <person name="Reich N."/>
            <person name="Repin V.E."/>
            <person name="Selker E.U."/>
            <person name="Shaw P.C."/>
            <person name="Stein D.C."/>
            <person name="Stoddard B.L."/>
            <person name="Szybalski W."/>
            <person name="Trautner T.A."/>
            <person name="Van Etten J.L."/>
            <person name="Vitor J.M."/>
            <person name="Wilson G.G."/>
            <person name="Xu S.Y."/>
        </authorList>
    </citation>
    <scope>NOMENCLATURE</scope>
    <scope>SUBTYPE</scope>
</reference>
<feature type="chain" id="PRO_0000087934" description="Type II methyltransferase M.SfiI">
    <location>
        <begin position="1"/>
        <end position="421"/>
    </location>
</feature>
<proteinExistence type="inferred from homology"/>
<name>MTS1_STRFI</name>
<comment type="function">
    <text>A beta subtype methylase, recognizes the double-stranded sequence 5'-GGCCNNNNNGGCC-3', methylates C-? on both strands, and protects the DNA from cleavage by the SfiI endonuclease.</text>
</comment>
<comment type="catalytic activity">
    <reaction>
        <text>a 2'-deoxycytidine in DNA + S-adenosyl-L-methionine = an N(4)-methyl-2'-deoxycytidine in DNA + S-adenosyl-L-homocysteine + H(+)</text>
        <dbReference type="Rhea" id="RHEA:16857"/>
        <dbReference type="Rhea" id="RHEA-COMP:11369"/>
        <dbReference type="Rhea" id="RHEA-COMP:13674"/>
        <dbReference type="ChEBI" id="CHEBI:15378"/>
        <dbReference type="ChEBI" id="CHEBI:57856"/>
        <dbReference type="ChEBI" id="CHEBI:59789"/>
        <dbReference type="ChEBI" id="CHEBI:85452"/>
        <dbReference type="ChEBI" id="CHEBI:137933"/>
        <dbReference type="EC" id="2.1.1.113"/>
    </reaction>
</comment>
<comment type="similarity">
    <text evidence="3">Belongs to the N(4)/N(6)-methyltransferase family. N(4) subfamily.</text>
</comment>
<dbReference type="EC" id="2.1.1.113"/>
<dbReference type="EMBL" id="AF039750">
    <property type="protein sequence ID" value="AAB95366.1"/>
    <property type="molecule type" value="Genomic_DNA"/>
</dbReference>
<dbReference type="RefSeq" id="WP_344643561.1">
    <property type="nucleotide sequence ID" value="NZ_BAAASS010000004.1"/>
</dbReference>
<dbReference type="BRENDA" id="2.1.1.113">
    <property type="organism ID" value="6011"/>
</dbReference>
<dbReference type="PRO" id="PR:O52513"/>
<dbReference type="GO" id="GO:0003677">
    <property type="term" value="F:DNA binding"/>
    <property type="evidence" value="ECO:0007669"/>
    <property type="project" value="UniProtKB-KW"/>
</dbReference>
<dbReference type="GO" id="GO:0008170">
    <property type="term" value="F:N-methyltransferase activity"/>
    <property type="evidence" value="ECO:0007669"/>
    <property type="project" value="InterPro"/>
</dbReference>
<dbReference type="GO" id="GO:0015667">
    <property type="term" value="F:site-specific DNA-methyltransferase (cytosine-N4-specific) activity"/>
    <property type="evidence" value="ECO:0007669"/>
    <property type="project" value="UniProtKB-EC"/>
</dbReference>
<dbReference type="GO" id="GO:0009307">
    <property type="term" value="P:DNA restriction-modification system"/>
    <property type="evidence" value="ECO:0007669"/>
    <property type="project" value="UniProtKB-KW"/>
</dbReference>
<dbReference type="GO" id="GO:0032259">
    <property type="term" value="P:methylation"/>
    <property type="evidence" value="ECO:0007669"/>
    <property type="project" value="UniProtKB-KW"/>
</dbReference>
<dbReference type="Gene3D" id="3.40.50.150">
    <property type="entry name" value="Vaccinia Virus protein VP39"/>
    <property type="match status" value="1"/>
</dbReference>
<dbReference type="InterPro" id="IPR002941">
    <property type="entry name" value="DNA_methylase_N4/N6"/>
</dbReference>
<dbReference type="InterPro" id="IPR017985">
    <property type="entry name" value="MeTrfase_CN4_CS"/>
</dbReference>
<dbReference type="InterPro" id="IPR001091">
    <property type="entry name" value="RM_Methyltransferase"/>
</dbReference>
<dbReference type="InterPro" id="IPR029063">
    <property type="entry name" value="SAM-dependent_MTases_sf"/>
</dbReference>
<dbReference type="Pfam" id="PF01555">
    <property type="entry name" value="N6_N4_Mtase"/>
    <property type="match status" value="1"/>
</dbReference>
<dbReference type="PRINTS" id="PR00508">
    <property type="entry name" value="S21N4MTFRASE"/>
</dbReference>
<dbReference type="SUPFAM" id="SSF53335">
    <property type="entry name" value="S-adenosyl-L-methionine-dependent methyltransferases"/>
    <property type="match status" value="1"/>
</dbReference>
<dbReference type="PROSITE" id="PS00093">
    <property type="entry name" value="N4_MTASE"/>
    <property type="match status" value="1"/>
</dbReference>
<protein>
    <recommendedName>
        <fullName evidence="1">Type II methyltransferase M.SfiI</fullName>
        <shortName evidence="1">M.SfiI</shortName>
        <ecNumber>2.1.1.113</ecNumber>
    </recommendedName>
    <alternativeName>
        <fullName>Modification methylase SfiI</fullName>
    </alternativeName>
    <alternativeName>
        <fullName>N-4 cytosine-specific methyltransferase SfiI</fullName>
    </alternativeName>
</protein>